<proteinExistence type="evidence at transcript level"/>
<keyword id="KW-1015">Disulfide bond</keyword>
<keyword id="KW-0945">Host-virus interaction</keyword>
<keyword id="KW-0426">Late protein</keyword>
<keyword id="KW-0472">Membrane</keyword>
<keyword id="KW-0812">Transmembrane</keyword>
<keyword id="KW-1133">Transmembrane helix</keyword>
<keyword id="KW-1161">Viral attachment to host cell</keyword>
<keyword id="KW-0261">Viral envelope protein</keyword>
<keyword id="KW-0946">Virion</keyword>
<keyword id="KW-1160">Virus entry into host cell</keyword>
<comment type="function">
    <text evidence="1">Binds to chondroitin sulfate on the cell surface to provide virion attachment to target cell.</text>
</comment>
<comment type="subunit">
    <text evidence="2">Homodimer; disulfide-linked.</text>
</comment>
<comment type="subcellular location">
    <subcellularLocation>
        <location evidence="2">Virion membrane</location>
    </subcellularLocation>
    <text evidence="2">Component of the mature virion (MV) membrane.</text>
</comment>
<comment type="induction">
    <text>Expressed in the late phase of the viral replicative cycle.</text>
</comment>
<comment type="PTM">
    <text evidence="2">Apparently non-glycosylated.</text>
</comment>
<comment type="similarity">
    <text evidence="5">Belongs to the alpha-carbonic anhydrase family.</text>
</comment>
<accession>O57211</accession>
<accession>A9J1U5</accession>
<sequence length="304" mass="35369">MPQQLSPINIETKKAISNARLKPLDIHYNESKPTTIQNTGKLVRINFKGGYISGGFLPNEYVLSSLRIYWGKEDDYGSNHLIDVYKYSGEINLVHWNKKKYSSYEEAKKHDDGLIIISIFLQVSDHKNVYFQKIVNQLDSIRSTNTSAPFDSVFYLDNLLPSKLDYFTYLGTTINHSADAVWIIFPTPINIHSDQLSKFRTLLSSSNHDGKPHYITENYRNPYKLNDDTQVYYSGEIIRAATTSPARENYFMRWLSDLRETCFSYYQKYIEGNKTFAIIAIVFVFILTAILFFMSQRYSREKQN</sequence>
<organism>
    <name type="scientific">Vaccinia virus (strain Ankara)</name>
    <name type="common">VACV</name>
    <dbReference type="NCBI Taxonomy" id="126794"/>
    <lineage>
        <taxon>Viruses</taxon>
        <taxon>Varidnaviria</taxon>
        <taxon>Bamfordvirae</taxon>
        <taxon>Nucleocytoviricota</taxon>
        <taxon>Pokkesviricetes</taxon>
        <taxon>Chitovirales</taxon>
        <taxon>Poxviridae</taxon>
        <taxon>Chordopoxvirinae</taxon>
        <taxon>Orthopoxvirus</taxon>
        <taxon>Vaccinia virus</taxon>
    </lineage>
</organism>
<protein>
    <recommendedName>
        <fullName>Cell surface-binding protein OPG105</fullName>
    </recommendedName>
    <alternativeName>
        <fullName>Carbonic anhydrase homolog</fullName>
    </alternativeName>
</protein>
<gene>
    <name type="primary">OPG105</name>
    <name type="ordered locus">MVA105L</name>
    <name type="ordered locus">ACAM3000_MVA_105</name>
    <name type="ORF">D8L</name>
</gene>
<organismHost>
    <name type="scientific">Homo sapiens</name>
    <name type="common">Human</name>
    <dbReference type="NCBI Taxonomy" id="9606"/>
</organismHost>
<reference key="1">
    <citation type="journal article" date="1998" name="Virology">
        <title>The complete genomic sequence of the modified vaccinia Ankara strain: comparison with other orthopoxviruses.</title>
        <authorList>
            <person name="Antoine G."/>
            <person name="Scheiflinger F."/>
            <person name="Dorner F."/>
            <person name="Falkner F.G."/>
        </authorList>
    </citation>
    <scope>NUCLEOTIDE SEQUENCE [LARGE SCALE GENOMIC DNA]</scope>
</reference>
<reference key="2">
    <citation type="submission" date="2004-04" db="EMBL/GenBank/DDBJ databases">
        <authorList>
            <person name="Esposito J.J."/>
            <person name="Frace M."/>
            <person name="Sammons S.A."/>
            <person name="Olsen-Rasmussen M.S."/>
            <person name="Osborne J."/>
            <person name="Khristova M."/>
            <person name="Wohlhueter R.M."/>
        </authorList>
    </citation>
    <scope>NUCLEOTIDE SEQUENCE [LARGE SCALE GENOMIC DNA]</scope>
    <source>
        <strain>Isolate Acambis 3000</strain>
    </source>
</reference>
<reference key="3">
    <citation type="journal article" date="2007" name="J. Gen. Virol.">
        <title>Genomic sequence of chorioallantois vaccinia virus Ankara, the ancestor of modified vaccinia virus Ankara.</title>
        <authorList>
            <person name="Meisinger-Henschel C."/>
            <person name="Schmidt M."/>
            <person name="Lukassen S."/>
            <person name="Linke B."/>
            <person name="Krause L."/>
            <person name="Konietzny S."/>
            <person name="Goesmann A."/>
            <person name="Howley P."/>
            <person name="Chaplin P."/>
            <person name="Suter M."/>
            <person name="Hausmann J."/>
        </authorList>
    </citation>
    <scope>NUCLEOTIDE SEQUENCE</scope>
</reference>
<feature type="chain" id="PRO_0000077448" description="Cell surface-binding protein OPG105">
    <location>
        <begin position="1"/>
        <end position="304"/>
    </location>
</feature>
<feature type="topological domain" description="Virion surface" evidence="3">
    <location>
        <begin position="1"/>
        <end position="275"/>
    </location>
</feature>
<feature type="transmembrane region" description="Helical" evidence="3">
    <location>
        <begin position="276"/>
        <end position="294"/>
    </location>
</feature>
<feature type="topological domain" description="Intravirion" evidence="3">
    <location>
        <begin position="295"/>
        <end position="304"/>
    </location>
</feature>
<feature type="domain" description="Alpha-carbonic anhydrase" evidence="4">
    <location>
        <begin position="1"/>
        <end position="235"/>
    </location>
</feature>
<feature type="disulfide bond" description="Interchain" evidence="1">
    <location>
        <position position="262"/>
    </location>
</feature>
<feature type="sequence conflict" description="In Ref. 3; CAM58283." evidence="5" ref="3">
    <original>R</original>
    <variation>H</variation>
    <location>
        <position position="67"/>
    </location>
</feature>
<feature type="sequence conflict" description="In Ref. 3; CAM58283." evidence="5" ref="3">
    <original>T</original>
    <variation>A</variation>
    <location>
        <position position="144"/>
    </location>
</feature>
<feature type="sequence conflict" description="In Ref. 3; CAM58283." evidence="5" ref="3">
    <original>Q</original>
    <variation>E</variation>
    <location>
        <position position="230"/>
    </location>
</feature>
<feature type="sequence conflict" description="In Ref. 3; CAM58283." evidence="5" ref="3">
    <original>G</original>
    <variation>E</variation>
    <location>
        <position position="272"/>
    </location>
</feature>
<feature type="sequence conflict" description="In Ref. 3; CAM58283." evidence="5" ref="3">
    <original>F</original>
    <variation>L</variation>
    <location>
        <position position="293"/>
    </location>
</feature>
<feature type="sequence conflict" description="In Ref. 3; CAM58283." evidence="5" ref="3">
    <original>Q</original>
    <variation>R</variation>
    <location>
        <position position="296"/>
    </location>
</feature>
<evidence type="ECO:0000250" key="1"/>
<evidence type="ECO:0000250" key="2">
    <source>
        <dbReference type="UniProtKB" id="P04195"/>
    </source>
</evidence>
<evidence type="ECO:0000255" key="3"/>
<evidence type="ECO:0000255" key="4">
    <source>
        <dbReference type="PROSITE-ProRule" id="PRU01134"/>
    </source>
</evidence>
<evidence type="ECO:0000305" key="5"/>
<name>CAHH_VACCA</name>
<dbReference type="EMBL" id="U94848">
    <property type="protein sequence ID" value="AAB96450.1"/>
    <property type="molecule type" value="Genomic_DNA"/>
</dbReference>
<dbReference type="EMBL" id="AY603355">
    <property type="protein sequence ID" value="AAT10503.1"/>
    <property type="molecule type" value="Genomic_DNA"/>
</dbReference>
<dbReference type="EMBL" id="AM501482">
    <property type="protein sequence ID" value="CAM58283.1"/>
    <property type="molecule type" value="Genomic_DNA"/>
</dbReference>
<dbReference type="PIR" id="T37381">
    <property type="entry name" value="T37381"/>
</dbReference>
<dbReference type="SMR" id="O57211"/>
<dbReference type="Proteomes" id="UP000136916">
    <property type="component" value="Genome"/>
</dbReference>
<dbReference type="Proteomes" id="UP000159908">
    <property type="component" value="Segment"/>
</dbReference>
<dbReference type="Proteomes" id="UP000172909">
    <property type="component" value="Segment"/>
</dbReference>
<dbReference type="GO" id="GO:0016020">
    <property type="term" value="C:membrane"/>
    <property type="evidence" value="ECO:0007669"/>
    <property type="project" value="UniProtKB-KW"/>
</dbReference>
<dbReference type="GO" id="GO:0019031">
    <property type="term" value="C:viral envelope"/>
    <property type="evidence" value="ECO:0007669"/>
    <property type="project" value="UniProtKB-KW"/>
</dbReference>
<dbReference type="GO" id="GO:0055036">
    <property type="term" value="C:virion membrane"/>
    <property type="evidence" value="ECO:0007669"/>
    <property type="project" value="UniProtKB-SubCell"/>
</dbReference>
<dbReference type="GO" id="GO:0004089">
    <property type="term" value="F:carbonate dehydratase activity"/>
    <property type="evidence" value="ECO:0007669"/>
    <property type="project" value="InterPro"/>
</dbReference>
<dbReference type="GO" id="GO:0008270">
    <property type="term" value="F:zinc ion binding"/>
    <property type="evidence" value="ECO:0007669"/>
    <property type="project" value="InterPro"/>
</dbReference>
<dbReference type="GO" id="GO:0046718">
    <property type="term" value="P:symbiont entry into host cell"/>
    <property type="evidence" value="ECO:0007669"/>
    <property type="project" value="UniProtKB-KW"/>
</dbReference>
<dbReference type="GO" id="GO:0019062">
    <property type="term" value="P:virion attachment to host cell"/>
    <property type="evidence" value="ECO:0007669"/>
    <property type="project" value="UniProtKB-KW"/>
</dbReference>
<dbReference type="Gene3D" id="3.10.200.10">
    <property type="entry name" value="Alpha carbonic anhydrase"/>
    <property type="match status" value="1"/>
</dbReference>
<dbReference type="InterPro" id="IPR001148">
    <property type="entry name" value="CA_dom"/>
</dbReference>
<dbReference type="InterPro" id="IPR036398">
    <property type="entry name" value="CA_dom_sf"/>
</dbReference>
<dbReference type="InterPro" id="IPR023561">
    <property type="entry name" value="Carbonic_anhydrase_a-class"/>
</dbReference>
<dbReference type="PANTHER" id="PTHR18952">
    <property type="entry name" value="CARBONIC ANHYDRASE"/>
    <property type="match status" value="1"/>
</dbReference>
<dbReference type="PANTHER" id="PTHR18952:SF124">
    <property type="entry name" value="CARBONIC ANHYDRASE 7"/>
    <property type="match status" value="1"/>
</dbReference>
<dbReference type="Pfam" id="PF00194">
    <property type="entry name" value="Carb_anhydrase"/>
    <property type="match status" value="1"/>
</dbReference>
<dbReference type="SMART" id="SM01057">
    <property type="entry name" value="Carb_anhydrase"/>
    <property type="match status" value="1"/>
</dbReference>
<dbReference type="SUPFAM" id="SSF51069">
    <property type="entry name" value="Carbonic anhydrase"/>
    <property type="match status" value="1"/>
</dbReference>
<dbReference type="PROSITE" id="PS51144">
    <property type="entry name" value="ALPHA_CA_2"/>
    <property type="match status" value="1"/>
</dbReference>